<comment type="catalytic activity">
    <reaction evidence="1">
        <text>2-formamido-N(1)-(5-O-phospho-beta-D-ribosyl)acetamidine + ATP = 5-amino-1-(5-phospho-beta-D-ribosyl)imidazole + ADP + phosphate + H(+)</text>
        <dbReference type="Rhea" id="RHEA:23032"/>
        <dbReference type="ChEBI" id="CHEBI:15378"/>
        <dbReference type="ChEBI" id="CHEBI:30616"/>
        <dbReference type="ChEBI" id="CHEBI:43474"/>
        <dbReference type="ChEBI" id="CHEBI:137981"/>
        <dbReference type="ChEBI" id="CHEBI:147287"/>
        <dbReference type="ChEBI" id="CHEBI:456216"/>
        <dbReference type="EC" id="6.3.3.1"/>
    </reaction>
</comment>
<comment type="pathway">
    <text evidence="1">Purine metabolism; IMP biosynthesis via de novo pathway; 5-amino-1-(5-phospho-D-ribosyl)imidazole from N(2)-formyl-N(1)-(5-phospho-D-ribosyl)glycinamide: step 2/2.</text>
</comment>
<comment type="subcellular location">
    <subcellularLocation>
        <location evidence="1">Cytoplasm</location>
    </subcellularLocation>
</comment>
<comment type="similarity">
    <text evidence="1">Belongs to the AIR synthase family.</text>
</comment>
<evidence type="ECO:0000255" key="1">
    <source>
        <dbReference type="HAMAP-Rule" id="MF_00741"/>
    </source>
</evidence>
<proteinExistence type="inferred from homology"/>
<feature type="chain" id="PRO_1000046473" description="Phosphoribosylformylglycinamidine cyclo-ligase">
    <location>
        <begin position="1"/>
        <end position="356"/>
    </location>
</feature>
<keyword id="KW-0067">ATP-binding</keyword>
<keyword id="KW-0963">Cytoplasm</keyword>
<keyword id="KW-0436">Ligase</keyword>
<keyword id="KW-0547">Nucleotide-binding</keyword>
<keyword id="KW-0658">Purine biosynthesis</keyword>
<name>PUR5_SINMW</name>
<sequence length="356" mass="36426">MSQSGKNGLTYSDAGVDIDAGNLMVEKIKPHVRSTRRPGADGEIGGFGGLFDLKAAGFSDPVLVAANDGVGTKLKIAIDAGKHDTVGIDLVAMCVNDLVVQGAEPLFFLDYFATGKLDPDQGAAIVAGIAAGCREAGCALIGGETAEMPGMYSGGDYDLAGFAVGAAERGQLLPAGNIAEGDVILGLSSSGVHSNGYSLVRKIVSLSGLAWDAPAPFGDGTVADLLMTPTRIYVKPLLKAIRETGAIKALAHITGGGFPENIPRVLPKPLAAEIDLDAIKPPAVFSWLAKTGGVAANEMLRTFNCGVGMIAVVSAGEAEKVAAVLAREGETVFTLGRMVSRSEDAPGTIYKGNLAI</sequence>
<gene>
    <name evidence="1" type="primary">purM</name>
    <name type="ordered locus">Smed_0792</name>
</gene>
<accession>A6U7L8</accession>
<organism>
    <name type="scientific">Sinorhizobium medicae (strain WSM419)</name>
    <name type="common">Ensifer medicae</name>
    <dbReference type="NCBI Taxonomy" id="366394"/>
    <lineage>
        <taxon>Bacteria</taxon>
        <taxon>Pseudomonadati</taxon>
        <taxon>Pseudomonadota</taxon>
        <taxon>Alphaproteobacteria</taxon>
        <taxon>Hyphomicrobiales</taxon>
        <taxon>Rhizobiaceae</taxon>
        <taxon>Sinorhizobium/Ensifer group</taxon>
        <taxon>Sinorhizobium</taxon>
    </lineage>
</organism>
<dbReference type="EC" id="6.3.3.1" evidence="1"/>
<dbReference type="EMBL" id="CP000738">
    <property type="protein sequence ID" value="ABR59648.1"/>
    <property type="molecule type" value="Genomic_DNA"/>
</dbReference>
<dbReference type="RefSeq" id="WP_011974990.1">
    <property type="nucleotide sequence ID" value="NC_009636.1"/>
</dbReference>
<dbReference type="RefSeq" id="YP_001326483.1">
    <property type="nucleotide sequence ID" value="NC_009636.1"/>
</dbReference>
<dbReference type="SMR" id="A6U7L8"/>
<dbReference type="STRING" id="366394.Smed_0792"/>
<dbReference type="KEGG" id="smd:Smed_0792"/>
<dbReference type="PATRIC" id="fig|366394.8.peg.3905"/>
<dbReference type="eggNOG" id="COG0150">
    <property type="taxonomic scope" value="Bacteria"/>
</dbReference>
<dbReference type="HOGENOM" id="CLU_047116_0_0_5"/>
<dbReference type="OrthoDB" id="9777881at2"/>
<dbReference type="UniPathway" id="UPA00074">
    <property type="reaction ID" value="UER00129"/>
</dbReference>
<dbReference type="Proteomes" id="UP000001108">
    <property type="component" value="Chromosome"/>
</dbReference>
<dbReference type="GO" id="GO:0005829">
    <property type="term" value="C:cytosol"/>
    <property type="evidence" value="ECO:0007669"/>
    <property type="project" value="TreeGrafter"/>
</dbReference>
<dbReference type="GO" id="GO:0005524">
    <property type="term" value="F:ATP binding"/>
    <property type="evidence" value="ECO:0007669"/>
    <property type="project" value="UniProtKB-KW"/>
</dbReference>
<dbReference type="GO" id="GO:0004637">
    <property type="term" value="F:phosphoribosylamine-glycine ligase activity"/>
    <property type="evidence" value="ECO:0007669"/>
    <property type="project" value="TreeGrafter"/>
</dbReference>
<dbReference type="GO" id="GO:0004641">
    <property type="term" value="F:phosphoribosylformylglycinamidine cyclo-ligase activity"/>
    <property type="evidence" value="ECO:0007669"/>
    <property type="project" value="UniProtKB-UniRule"/>
</dbReference>
<dbReference type="GO" id="GO:0006189">
    <property type="term" value="P:'de novo' IMP biosynthetic process"/>
    <property type="evidence" value="ECO:0007669"/>
    <property type="project" value="UniProtKB-UniRule"/>
</dbReference>
<dbReference type="GO" id="GO:0046084">
    <property type="term" value="P:adenine biosynthetic process"/>
    <property type="evidence" value="ECO:0007669"/>
    <property type="project" value="TreeGrafter"/>
</dbReference>
<dbReference type="CDD" id="cd02196">
    <property type="entry name" value="PurM"/>
    <property type="match status" value="1"/>
</dbReference>
<dbReference type="FunFam" id="3.30.1330.10:FF:000001">
    <property type="entry name" value="Phosphoribosylformylglycinamidine cyclo-ligase"/>
    <property type="match status" value="1"/>
</dbReference>
<dbReference type="FunFam" id="3.90.650.10:FF:000007">
    <property type="entry name" value="Trifunctional purine biosynthetic protein adenosine-3"/>
    <property type="match status" value="1"/>
</dbReference>
<dbReference type="Gene3D" id="3.90.650.10">
    <property type="entry name" value="PurM-like C-terminal domain"/>
    <property type="match status" value="1"/>
</dbReference>
<dbReference type="Gene3D" id="3.30.1330.10">
    <property type="entry name" value="PurM-like, N-terminal domain"/>
    <property type="match status" value="1"/>
</dbReference>
<dbReference type="HAMAP" id="MF_00741">
    <property type="entry name" value="AIRS"/>
    <property type="match status" value="1"/>
</dbReference>
<dbReference type="InterPro" id="IPR010918">
    <property type="entry name" value="PurM-like_C_dom"/>
</dbReference>
<dbReference type="InterPro" id="IPR036676">
    <property type="entry name" value="PurM-like_C_sf"/>
</dbReference>
<dbReference type="InterPro" id="IPR016188">
    <property type="entry name" value="PurM-like_N"/>
</dbReference>
<dbReference type="InterPro" id="IPR036921">
    <property type="entry name" value="PurM-like_N_sf"/>
</dbReference>
<dbReference type="InterPro" id="IPR004733">
    <property type="entry name" value="PurM_cligase"/>
</dbReference>
<dbReference type="NCBIfam" id="TIGR00878">
    <property type="entry name" value="purM"/>
    <property type="match status" value="1"/>
</dbReference>
<dbReference type="PANTHER" id="PTHR10520:SF12">
    <property type="entry name" value="TRIFUNCTIONAL PURINE BIOSYNTHETIC PROTEIN ADENOSINE-3"/>
    <property type="match status" value="1"/>
</dbReference>
<dbReference type="PANTHER" id="PTHR10520">
    <property type="entry name" value="TRIFUNCTIONAL PURINE BIOSYNTHETIC PROTEIN ADENOSINE-3-RELATED"/>
    <property type="match status" value="1"/>
</dbReference>
<dbReference type="Pfam" id="PF00586">
    <property type="entry name" value="AIRS"/>
    <property type="match status" value="1"/>
</dbReference>
<dbReference type="Pfam" id="PF02769">
    <property type="entry name" value="AIRS_C"/>
    <property type="match status" value="1"/>
</dbReference>
<dbReference type="SUPFAM" id="SSF56042">
    <property type="entry name" value="PurM C-terminal domain-like"/>
    <property type="match status" value="1"/>
</dbReference>
<dbReference type="SUPFAM" id="SSF55326">
    <property type="entry name" value="PurM N-terminal domain-like"/>
    <property type="match status" value="1"/>
</dbReference>
<reference key="1">
    <citation type="submission" date="2007-06" db="EMBL/GenBank/DDBJ databases">
        <title>Complete sequence of Sinorhizobium medicae WSM419 chromosome.</title>
        <authorList>
            <consortium name="US DOE Joint Genome Institute"/>
            <person name="Copeland A."/>
            <person name="Lucas S."/>
            <person name="Lapidus A."/>
            <person name="Barry K."/>
            <person name="Glavina del Rio T."/>
            <person name="Dalin E."/>
            <person name="Tice H."/>
            <person name="Pitluck S."/>
            <person name="Chain P."/>
            <person name="Malfatti S."/>
            <person name="Shin M."/>
            <person name="Vergez L."/>
            <person name="Schmutz J."/>
            <person name="Larimer F."/>
            <person name="Land M."/>
            <person name="Hauser L."/>
            <person name="Kyrpides N."/>
            <person name="Mikhailova N."/>
            <person name="Reeve W.G."/>
            <person name="Richardson P."/>
        </authorList>
    </citation>
    <scope>NUCLEOTIDE SEQUENCE [LARGE SCALE GENOMIC DNA]</scope>
    <source>
        <strain>WSM419</strain>
    </source>
</reference>
<protein>
    <recommendedName>
        <fullName evidence="1">Phosphoribosylformylglycinamidine cyclo-ligase</fullName>
        <ecNumber evidence="1">6.3.3.1</ecNumber>
    </recommendedName>
    <alternativeName>
        <fullName evidence="1">AIR synthase</fullName>
    </alternativeName>
    <alternativeName>
        <fullName evidence="1">AIRS</fullName>
    </alternativeName>
    <alternativeName>
        <fullName evidence="1">Phosphoribosyl-aminoimidazole synthetase</fullName>
    </alternativeName>
</protein>